<dbReference type="EMBL" id="M20318">
    <property type="protein sequence ID" value="AAA53538.1"/>
    <property type="molecule type" value="Genomic_DNA"/>
</dbReference>
<dbReference type="EMBL" id="X74544">
    <property type="protein sequence ID" value="CAA52633.1"/>
    <property type="molecule type" value="Genomic_DNA"/>
</dbReference>
<dbReference type="EMBL" id="Z35782">
    <property type="protein sequence ID" value="CAA84840.1"/>
    <property type="molecule type" value="Genomic_DNA"/>
</dbReference>
<dbReference type="EMBL" id="AY558459">
    <property type="protein sequence ID" value="AAS56785.1"/>
    <property type="molecule type" value="Genomic_DNA"/>
</dbReference>
<dbReference type="EMBL" id="BK006936">
    <property type="protein sequence ID" value="DAA07099.1"/>
    <property type="molecule type" value="Genomic_DNA"/>
</dbReference>
<dbReference type="PIR" id="A28123">
    <property type="entry name" value="A28123"/>
</dbReference>
<dbReference type="RefSeq" id="NP_009532.1">
    <property type="nucleotide sequence ID" value="NM_001178261.1"/>
</dbReference>
<dbReference type="SMR" id="P13434"/>
<dbReference type="BioGRID" id="32677">
    <property type="interactions" value="385"/>
</dbReference>
<dbReference type="ComplexPortal" id="CPX-1830">
    <property type="entry name" value="CCAAT-binding factor complex"/>
</dbReference>
<dbReference type="DIP" id="DIP-1362N"/>
<dbReference type="FunCoup" id="P13434">
    <property type="interactions" value="921"/>
</dbReference>
<dbReference type="IntAct" id="P13434">
    <property type="interactions" value="11"/>
</dbReference>
<dbReference type="MINT" id="P13434"/>
<dbReference type="STRING" id="4932.YBL021C"/>
<dbReference type="PaxDb" id="4932-YBL021C"/>
<dbReference type="PeptideAtlas" id="P13434"/>
<dbReference type="EnsemblFungi" id="YBL021C_mRNA">
    <property type="protein sequence ID" value="YBL021C"/>
    <property type="gene ID" value="YBL021C"/>
</dbReference>
<dbReference type="GeneID" id="852260"/>
<dbReference type="KEGG" id="sce:YBL021C"/>
<dbReference type="AGR" id="SGD:S000000117"/>
<dbReference type="SGD" id="S000000117">
    <property type="gene designation" value="HAP3"/>
</dbReference>
<dbReference type="VEuPathDB" id="FungiDB:YBL021C"/>
<dbReference type="eggNOG" id="KOG0869">
    <property type="taxonomic scope" value="Eukaryota"/>
</dbReference>
<dbReference type="GeneTree" id="ENSGT00940000174727"/>
<dbReference type="HOGENOM" id="CLU_066247_12_1_1"/>
<dbReference type="InParanoid" id="P13434"/>
<dbReference type="OMA" id="NEDMPVW"/>
<dbReference type="OrthoDB" id="386949at2759"/>
<dbReference type="BioCyc" id="YEAST:G3O-28924-MONOMER"/>
<dbReference type="BioGRID-ORCS" id="852260">
    <property type="hits" value="10 hits in 10 CRISPR screens"/>
</dbReference>
<dbReference type="PRO" id="PR:P13434"/>
<dbReference type="Proteomes" id="UP000002311">
    <property type="component" value="Chromosome II"/>
</dbReference>
<dbReference type="RNAct" id="P13434">
    <property type="molecule type" value="protein"/>
</dbReference>
<dbReference type="GO" id="GO:0016602">
    <property type="term" value="C:CCAAT-binding factor complex"/>
    <property type="evidence" value="ECO:0000314"/>
    <property type="project" value="SGD"/>
</dbReference>
<dbReference type="GO" id="GO:0001228">
    <property type="term" value="F:DNA-binding transcription activator activity, RNA polymerase II-specific"/>
    <property type="evidence" value="ECO:0007669"/>
    <property type="project" value="InterPro"/>
</dbReference>
<dbReference type="GO" id="GO:0000981">
    <property type="term" value="F:DNA-binding transcription factor activity, RNA polymerase II-specific"/>
    <property type="evidence" value="ECO:0000318"/>
    <property type="project" value="GO_Central"/>
</dbReference>
<dbReference type="GO" id="GO:0046982">
    <property type="term" value="F:protein heterodimerization activity"/>
    <property type="evidence" value="ECO:0007669"/>
    <property type="project" value="InterPro"/>
</dbReference>
<dbReference type="GO" id="GO:0043565">
    <property type="term" value="F:sequence-specific DNA binding"/>
    <property type="evidence" value="ECO:0007669"/>
    <property type="project" value="InterPro"/>
</dbReference>
<dbReference type="GO" id="GO:0045944">
    <property type="term" value="P:positive regulation of transcription by RNA polymerase II"/>
    <property type="evidence" value="ECO:0000314"/>
    <property type="project" value="SGD"/>
</dbReference>
<dbReference type="GO" id="GO:0006109">
    <property type="term" value="P:regulation of carbohydrate metabolic process"/>
    <property type="evidence" value="ECO:0000303"/>
    <property type="project" value="ComplexPortal"/>
</dbReference>
<dbReference type="GO" id="GO:0043457">
    <property type="term" value="P:regulation of cellular respiration"/>
    <property type="evidence" value="ECO:0000315"/>
    <property type="project" value="SGD"/>
</dbReference>
<dbReference type="GO" id="GO:0006355">
    <property type="term" value="P:regulation of DNA-templated transcription"/>
    <property type="evidence" value="ECO:0000303"/>
    <property type="project" value="ComplexPortal"/>
</dbReference>
<dbReference type="GO" id="GO:0006357">
    <property type="term" value="P:regulation of transcription by RNA polymerase II"/>
    <property type="evidence" value="ECO:0000318"/>
    <property type="project" value="GO_Central"/>
</dbReference>
<dbReference type="CDD" id="cd22907">
    <property type="entry name" value="HFD_NFYB"/>
    <property type="match status" value="1"/>
</dbReference>
<dbReference type="FunFam" id="1.10.20.10:FF:000082">
    <property type="entry name" value="Transcriptional activator, variant"/>
    <property type="match status" value="1"/>
</dbReference>
<dbReference type="Gene3D" id="1.10.20.10">
    <property type="entry name" value="Histone, subunit A"/>
    <property type="match status" value="1"/>
</dbReference>
<dbReference type="InterPro" id="IPR003958">
    <property type="entry name" value="CBFA_NFYB_domain"/>
</dbReference>
<dbReference type="InterPro" id="IPR009072">
    <property type="entry name" value="Histone-fold"/>
</dbReference>
<dbReference type="InterPro" id="IPR027113">
    <property type="entry name" value="Transc_fact_NFYB/HAP3"/>
</dbReference>
<dbReference type="InterPro" id="IPR003956">
    <property type="entry name" value="Transcrpt_fac_NFYB/HAP3_CS"/>
</dbReference>
<dbReference type="PANTHER" id="PTHR11064">
    <property type="entry name" value="CCAAT-BINDING TRANSCRIPTION FACTOR-RELATED"/>
    <property type="match status" value="1"/>
</dbReference>
<dbReference type="PANTHER" id="PTHR11064:SF9">
    <property type="entry name" value="NUCLEAR TRANSCRIPTION FACTOR Y SUBUNIT BETA"/>
    <property type="match status" value="1"/>
</dbReference>
<dbReference type="Pfam" id="PF00808">
    <property type="entry name" value="CBFD_NFYB_HMF"/>
    <property type="match status" value="1"/>
</dbReference>
<dbReference type="PRINTS" id="PR00615">
    <property type="entry name" value="CCAATSUBUNTA"/>
</dbReference>
<dbReference type="SUPFAM" id="SSF47113">
    <property type="entry name" value="Histone-fold"/>
    <property type="match status" value="1"/>
</dbReference>
<dbReference type="PROSITE" id="PS00685">
    <property type="entry name" value="NFYB_HAP3"/>
    <property type="match status" value="1"/>
</dbReference>
<keyword id="KW-0010">Activator</keyword>
<keyword id="KW-0238">DNA-binding</keyword>
<keyword id="KW-0539">Nucleus</keyword>
<keyword id="KW-1185">Reference proteome</keyword>
<keyword id="KW-0804">Transcription</keyword>
<keyword id="KW-0805">Transcription regulation</keyword>
<name>HAP3_YEAST</name>
<feature type="chain" id="PRO_0000204630" description="Transcriptional activator HAP3">
    <location>
        <begin position="1"/>
        <end position="144"/>
    </location>
</feature>
<feature type="DNA-binding region">
    <location>
        <begin position="42"/>
        <end position="48"/>
    </location>
</feature>
<feature type="region of interest" description="Disordered" evidence="1">
    <location>
        <begin position="1"/>
        <end position="31"/>
    </location>
</feature>
<feature type="region of interest" description="Subunit association domain (SAD)">
    <location>
        <begin position="69"/>
        <end position="80"/>
    </location>
</feature>
<feature type="compositionally biased region" description="Polar residues" evidence="1">
    <location>
        <begin position="9"/>
        <end position="31"/>
    </location>
</feature>
<reference key="1">
    <citation type="journal article" date="1988" name="Mol. Cell. Biol.">
        <title>The HAP3 regulatory locus of Saccharomyces cerevisiae encodes divergent overlapping transcripts.</title>
        <authorList>
            <person name="Hahn S."/>
            <person name="Pinkham J."/>
            <person name="Wei R."/>
            <person name="Miller R."/>
            <person name="Guarente L."/>
        </authorList>
    </citation>
    <scope>NUCLEOTIDE SEQUENCE [GENOMIC DNA]</scope>
    <source>
        <strain>ATCC MYA-3516 / BWG1-7A</strain>
    </source>
</reference>
<reference key="2">
    <citation type="journal article" date="1994" name="J. Biol. Chem.">
        <title>PIM1 encodes a mitochondrial ATP-dependent protease that is required for mitochondrial function in the yeast Saccharomyces cerevisiae.</title>
        <authorList>
            <person name="van Dyck L."/>
            <person name="Pearce D.A."/>
            <person name="Sherman F."/>
        </authorList>
    </citation>
    <scope>NUCLEOTIDE SEQUENCE [GENOMIC DNA]</scope>
    <source>
        <strain>ATCC 204508 / S288c</strain>
    </source>
</reference>
<reference key="3">
    <citation type="journal article" date="1994" name="EMBO J.">
        <title>Complete DNA sequence of yeast chromosome II.</title>
        <authorList>
            <person name="Feldmann H."/>
            <person name="Aigle M."/>
            <person name="Aljinovic G."/>
            <person name="Andre B."/>
            <person name="Baclet M.C."/>
            <person name="Barthe C."/>
            <person name="Baur A."/>
            <person name="Becam A.-M."/>
            <person name="Biteau N."/>
            <person name="Boles E."/>
            <person name="Brandt T."/>
            <person name="Brendel M."/>
            <person name="Brueckner M."/>
            <person name="Bussereau F."/>
            <person name="Christiansen C."/>
            <person name="Contreras R."/>
            <person name="Crouzet M."/>
            <person name="Cziepluch C."/>
            <person name="Demolis N."/>
            <person name="Delaveau T."/>
            <person name="Doignon F."/>
            <person name="Domdey H."/>
            <person name="Duesterhus S."/>
            <person name="Dubois E."/>
            <person name="Dujon B."/>
            <person name="El Bakkoury M."/>
            <person name="Entian K.-D."/>
            <person name="Feuermann M."/>
            <person name="Fiers W."/>
            <person name="Fobo G.M."/>
            <person name="Fritz C."/>
            <person name="Gassenhuber J."/>
            <person name="Glansdorff N."/>
            <person name="Goffeau A."/>
            <person name="Grivell L.A."/>
            <person name="de Haan M."/>
            <person name="Hein C."/>
            <person name="Herbert C.J."/>
            <person name="Hollenberg C.P."/>
            <person name="Holmstroem K."/>
            <person name="Jacq C."/>
            <person name="Jacquet M."/>
            <person name="Jauniaux J.-C."/>
            <person name="Jonniaux J.-L."/>
            <person name="Kallesoee T."/>
            <person name="Kiesau P."/>
            <person name="Kirchrath L."/>
            <person name="Koetter P."/>
            <person name="Korol S."/>
            <person name="Liebl S."/>
            <person name="Logghe M."/>
            <person name="Lohan A.J.E."/>
            <person name="Louis E.J."/>
            <person name="Li Z.Y."/>
            <person name="Maat M.J."/>
            <person name="Mallet L."/>
            <person name="Mannhaupt G."/>
            <person name="Messenguy F."/>
            <person name="Miosga T."/>
            <person name="Molemans F."/>
            <person name="Mueller S."/>
            <person name="Nasr F."/>
            <person name="Obermaier B."/>
            <person name="Perea J."/>
            <person name="Pierard A."/>
            <person name="Piravandi E."/>
            <person name="Pohl F.M."/>
            <person name="Pohl T.M."/>
            <person name="Potier S."/>
            <person name="Proft M."/>
            <person name="Purnelle B."/>
            <person name="Ramezani Rad M."/>
            <person name="Rieger M."/>
            <person name="Rose M."/>
            <person name="Schaaff-Gerstenschlaeger I."/>
            <person name="Scherens B."/>
            <person name="Schwarzlose C."/>
            <person name="Skala J."/>
            <person name="Slonimski P.P."/>
            <person name="Smits P.H.M."/>
            <person name="Souciet J.-L."/>
            <person name="Steensma H.Y."/>
            <person name="Stucka R."/>
            <person name="Urrestarazu L.A."/>
            <person name="van der Aart Q.J.M."/>
            <person name="Van Dyck L."/>
            <person name="Vassarotti A."/>
            <person name="Vetter I."/>
            <person name="Vierendeels F."/>
            <person name="Vissers S."/>
            <person name="Wagner G."/>
            <person name="de Wergifosse P."/>
            <person name="Wolfe K.H."/>
            <person name="Zagulski M."/>
            <person name="Zimmermann F.K."/>
            <person name="Mewes H.-W."/>
            <person name="Kleine K."/>
        </authorList>
    </citation>
    <scope>NUCLEOTIDE SEQUENCE [LARGE SCALE GENOMIC DNA]</scope>
    <source>
        <strain>ATCC 204508 / S288c</strain>
    </source>
</reference>
<reference key="4">
    <citation type="journal article" date="2014" name="G3 (Bethesda)">
        <title>The reference genome sequence of Saccharomyces cerevisiae: Then and now.</title>
        <authorList>
            <person name="Engel S.R."/>
            <person name="Dietrich F.S."/>
            <person name="Fisk D.G."/>
            <person name="Binkley G."/>
            <person name="Balakrishnan R."/>
            <person name="Costanzo M.C."/>
            <person name="Dwight S.S."/>
            <person name="Hitz B.C."/>
            <person name="Karra K."/>
            <person name="Nash R.S."/>
            <person name="Weng S."/>
            <person name="Wong E.D."/>
            <person name="Lloyd P."/>
            <person name="Skrzypek M.S."/>
            <person name="Miyasato S.R."/>
            <person name="Simison M."/>
            <person name="Cherry J.M."/>
        </authorList>
    </citation>
    <scope>GENOME REANNOTATION</scope>
    <source>
        <strain>ATCC 204508 / S288c</strain>
    </source>
</reference>
<reference key="5">
    <citation type="journal article" date="2007" name="Genome Res.">
        <title>Approaching a complete repository of sequence-verified protein-encoding clones for Saccharomyces cerevisiae.</title>
        <authorList>
            <person name="Hu Y."/>
            <person name="Rolfs A."/>
            <person name="Bhullar B."/>
            <person name="Murthy T.V.S."/>
            <person name="Zhu C."/>
            <person name="Berger M.F."/>
            <person name="Camargo A.A."/>
            <person name="Kelley F."/>
            <person name="McCarron S."/>
            <person name="Jepson D."/>
            <person name="Richardson A."/>
            <person name="Raphael J."/>
            <person name="Moreira D."/>
            <person name="Taycher E."/>
            <person name="Zuo D."/>
            <person name="Mohr S."/>
            <person name="Kane M.F."/>
            <person name="Williamson J."/>
            <person name="Simpson A.J.G."/>
            <person name="Bulyk M.L."/>
            <person name="Harlow E."/>
            <person name="Marsischky G."/>
            <person name="Kolodner R.D."/>
            <person name="LaBaer J."/>
        </authorList>
    </citation>
    <scope>NUCLEOTIDE SEQUENCE [GENOMIC DNA]</scope>
    <source>
        <strain>ATCC 204508 / S288c</strain>
    </source>
</reference>
<reference key="6">
    <citation type="journal article" date="1993" name="EMBO J.">
        <title>Mutations in yeast HAP2/HAP3 define a hybrid CCAAT box binding domain.</title>
        <authorList>
            <person name="Xing Y."/>
            <person name="Fikes J.D."/>
            <person name="Guarente L."/>
        </authorList>
    </citation>
    <scope>MUTAGENESIS</scope>
</reference>
<reference key="7">
    <citation type="journal article" date="2001" name="J. Biol. Chem.">
        <title>A multiprotein complex that interacts with RNA polymerase II elongator.</title>
        <authorList>
            <person name="Li Y."/>
            <person name="Takagi Y."/>
            <person name="Jiang Y."/>
            <person name="Tokunaga M."/>
            <person name="Erdjument-Bromage H."/>
            <person name="Tempst P."/>
            <person name="Kornberg R.D."/>
        </authorList>
    </citation>
    <scope>IDENTIFICATION IN THE CCAT-BINDING FACTOR</scope>
</reference>
<reference key="8">
    <citation type="journal article" date="2003" name="Nature">
        <title>Global analysis of protein expression in yeast.</title>
        <authorList>
            <person name="Ghaemmaghami S."/>
            <person name="Huh W.-K."/>
            <person name="Bower K."/>
            <person name="Howson R.W."/>
            <person name="Belle A."/>
            <person name="Dephoure N."/>
            <person name="O'Shea E.K."/>
            <person name="Weissman J.S."/>
        </authorList>
    </citation>
    <scope>LEVEL OF PROTEIN EXPRESSION [LARGE SCALE ANALYSIS]</scope>
</reference>
<reference key="9">
    <citation type="journal article" date="2005" name="Eukaryot. Cell">
        <title>Assembly of the Hap2p/Hap3p/Hap4p/Hap5p-DNA complex in Saccharomyces cerevisiae.</title>
        <authorList>
            <person name="McNabb D.S."/>
            <person name="Pinto I."/>
        </authorList>
    </citation>
    <scope>ASSEMBLY OF THE CCAT-BINDING FACTOR</scope>
</reference>
<sequence>MNTNESEHVSTSPEDTQENGGNASSSGSLQQISTLREQDRWLPINNVARLMKNTLPPSAKVSKDAKECMQECVSELISFVTSEASDRCAADKRKTINGEDILISLHALGFENYAEVLKIYLAKYRQQQALKNQLMYEQDDEEVP</sequence>
<organism>
    <name type="scientific">Saccharomyces cerevisiae (strain ATCC 204508 / S288c)</name>
    <name type="common">Baker's yeast</name>
    <dbReference type="NCBI Taxonomy" id="559292"/>
    <lineage>
        <taxon>Eukaryota</taxon>
        <taxon>Fungi</taxon>
        <taxon>Dikarya</taxon>
        <taxon>Ascomycota</taxon>
        <taxon>Saccharomycotina</taxon>
        <taxon>Saccharomycetes</taxon>
        <taxon>Saccharomycetales</taxon>
        <taxon>Saccharomycetaceae</taxon>
        <taxon>Saccharomyces</taxon>
    </lineage>
</organism>
<gene>
    <name type="primary">HAP3</name>
    <name type="ordered locus">YBL021C</name>
    <name type="ORF">YBL0441</name>
</gene>
<evidence type="ECO:0000256" key="1">
    <source>
        <dbReference type="SAM" id="MobiDB-lite"/>
    </source>
</evidence>
<evidence type="ECO:0000269" key="2">
    <source>
    </source>
</evidence>
<evidence type="ECO:0000269" key="3">
    <source>
    </source>
</evidence>
<evidence type="ECO:0000305" key="4"/>
<comment type="function">
    <text>Acts a component of the CCAT-binding factor, which is a transcriptional activator and binds to the upstream activation site (UAS2) of the CYC1 gene and other genes involved in mitochondrial electron transport and activates their expression. Recognizes the sequence 5'-CCAAT-3'.</text>
</comment>
<comment type="subunit">
    <text evidence="2">Component of the CCAT-binding factor (CBF or HAP complex II), which consists of one copy each of HAP2, HAP3, HAP4 and HAP5. The assembly of the HAP2-HAP3-HAP5 heteromer (HAP complex I) occurs in a one-step pathway and its binding to DNA is a prerequisite for the association of HAP4.</text>
</comment>
<comment type="subcellular location">
    <subcellularLocation>
        <location>Nucleus</location>
    </subcellularLocation>
</comment>
<comment type="miscellaneous">
    <text evidence="3">Present with 2510 molecules/cell in log phase SD medium.</text>
</comment>
<comment type="similarity">
    <text evidence="4">Belongs to the NFYB/HAP3 subunit family.</text>
</comment>
<accession>P13434</accession>
<accession>D6VPX9</accession>
<protein>
    <recommendedName>
        <fullName>Transcriptional activator HAP3</fullName>
    </recommendedName>
    <alternativeName>
        <fullName>UAS2 regulatory protein A</fullName>
    </alternativeName>
</protein>
<proteinExistence type="evidence at protein level"/>